<protein>
    <recommendedName>
        <fullName evidence="1">Large ribosomal subunit protein bL9</fullName>
    </recommendedName>
    <alternativeName>
        <fullName evidence="2">50S ribosomal protein L9</fullName>
    </alternativeName>
</protein>
<organism>
    <name type="scientific">Picosynechococcus sp. (strain ATCC 27264 / PCC 7002 / PR-6)</name>
    <name type="common">Agmenellum quadruplicatum</name>
    <dbReference type="NCBI Taxonomy" id="32049"/>
    <lineage>
        <taxon>Bacteria</taxon>
        <taxon>Bacillati</taxon>
        <taxon>Cyanobacteriota</taxon>
        <taxon>Cyanophyceae</taxon>
        <taxon>Oscillatoriophycideae</taxon>
        <taxon>Chroococcales</taxon>
        <taxon>Geminocystaceae</taxon>
        <taxon>Picosynechococcus</taxon>
    </lineage>
</organism>
<evidence type="ECO:0000255" key="1">
    <source>
        <dbReference type="HAMAP-Rule" id="MF_00503"/>
    </source>
</evidence>
<evidence type="ECO:0000305" key="2"/>
<comment type="function">
    <text evidence="1">Binds to the 23S rRNA.</text>
</comment>
<comment type="similarity">
    <text evidence="1">Belongs to the bacterial ribosomal protein bL9 family.</text>
</comment>
<accession>B1XN09</accession>
<feature type="chain" id="PRO_1000126983" description="Large ribosomal subunit protein bL9">
    <location>
        <begin position="1"/>
        <end position="152"/>
    </location>
</feature>
<proteinExistence type="inferred from homology"/>
<dbReference type="EMBL" id="CP000951">
    <property type="protein sequence ID" value="ACA99489.1"/>
    <property type="molecule type" value="Genomic_DNA"/>
</dbReference>
<dbReference type="RefSeq" id="WP_012307112.1">
    <property type="nucleotide sequence ID" value="NZ_JAHHPU010000007.1"/>
</dbReference>
<dbReference type="SMR" id="B1XN09"/>
<dbReference type="STRING" id="32049.SYNPCC7002_A1498"/>
<dbReference type="KEGG" id="syp:SYNPCC7002_A1498"/>
<dbReference type="eggNOG" id="COG0359">
    <property type="taxonomic scope" value="Bacteria"/>
</dbReference>
<dbReference type="HOGENOM" id="CLU_078938_5_1_3"/>
<dbReference type="Proteomes" id="UP000001688">
    <property type="component" value="Chromosome"/>
</dbReference>
<dbReference type="GO" id="GO:1990904">
    <property type="term" value="C:ribonucleoprotein complex"/>
    <property type="evidence" value="ECO:0007669"/>
    <property type="project" value="UniProtKB-KW"/>
</dbReference>
<dbReference type="GO" id="GO:0005840">
    <property type="term" value="C:ribosome"/>
    <property type="evidence" value="ECO:0007669"/>
    <property type="project" value="UniProtKB-KW"/>
</dbReference>
<dbReference type="GO" id="GO:0019843">
    <property type="term" value="F:rRNA binding"/>
    <property type="evidence" value="ECO:0007669"/>
    <property type="project" value="UniProtKB-UniRule"/>
</dbReference>
<dbReference type="GO" id="GO:0003735">
    <property type="term" value="F:structural constituent of ribosome"/>
    <property type="evidence" value="ECO:0007669"/>
    <property type="project" value="InterPro"/>
</dbReference>
<dbReference type="GO" id="GO:0006412">
    <property type="term" value="P:translation"/>
    <property type="evidence" value="ECO:0007669"/>
    <property type="project" value="UniProtKB-UniRule"/>
</dbReference>
<dbReference type="FunFam" id="3.40.5.10:FF:000003">
    <property type="entry name" value="50S ribosomal protein L9"/>
    <property type="match status" value="1"/>
</dbReference>
<dbReference type="Gene3D" id="3.10.430.100">
    <property type="entry name" value="Ribosomal protein L9, C-terminal domain"/>
    <property type="match status" value="1"/>
</dbReference>
<dbReference type="Gene3D" id="3.40.5.10">
    <property type="entry name" value="Ribosomal protein L9, N-terminal domain"/>
    <property type="match status" value="1"/>
</dbReference>
<dbReference type="HAMAP" id="MF_00503">
    <property type="entry name" value="Ribosomal_bL9"/>
    <property type="match status" value="1"/>
</dbReference>
<dbReference type="InterPro" id="IPR000244">
    <property type="entry name" value="Ribosomal_bL9"/>
</dbReference>
<dbReference type="InterPro" id="IPR009027">
    <property type="entry name" value="Ribosomal_bL9/RNase_H1_N"/>
</dbReference>
<dbReference type="InterPro" id="IPR020594">
    <property type="entry name" value="Ribosomal_bL9_bac/chp"/>
</dbReference>
<dbReference type="InterPro" id="IPR020069">
    <property type="entry name" value="Ribosomal_bL9_C"/>
</dbReference>
<dbReference type="InterPro" id="IPR036791">
    <property type="entry name" value="Ribosomal_bL9_C_sf"/>
</dbReference>
<dbReference type="InterPro" id="IPR020070">
    <property type="entry name" value="Ribosomal_bL9_N"/>
</dbReference>
<dbReference type="InterPro" id="IPR036935">
    <property type="entry name" value="Ribosomal_bL9_N_sf"/>
</dbReference>
<dbReference type="NCBIfam" id="TIGR00158">
    <property type="entry name" value="L9"/>
    <property type="match status" value="1"/>
</dbReference>
<dbReference type="PANTHER" id="PTHR21368">
    <property type="entry name" value="50S RIBOSOMAL PROTEIN L9"/>
    <property type="match status" value="1"/>
</dbReference>
<dbReference type="Pfam" id="PF03948">
    <property type="entry name" value="Ribosomal_L9_C"/>
    <property type="match status" value="1"/>
</dbReference>
<dbReference type="Pfam" id="PF01281">
    <property type="entry name" value="Ribosomal_L9_N"/>
    <property type="match status" value="1"/>
</dbReference>
<dbReference type="SUPFAM" id="SSF55658">
    <property type="entry name" value="L9 N-domain-like"/>
    <property type="match status" value="1"/>
</dbReference>
<dbReference type="SUPFAM" id="SSF55653">
    <property type="entry name" value="Ribosomal protein L9 C-domain"/>
    <property type="match status" value="1"/>
</dbReference>
<dbReference type="PROSITE" id="PS00651">
    <property type="entry name" value="RIBOSOMAL_L9"/>
    <property type="match status" value="1"/>
</dbReference>
<sequence length="152" mass="16866">MSKRLQVVLNQDVRKLGNNGDLVEVAPGYARNYLLPQGIASLATPGILRQVEQRREKERQRLLAELQDAEARKVALKTVGKLIIRKQVGEENQIFGTVTTQDVADAIKERAGQDVDRRGITLPEIGKTGSYEAQVKLHPEVTATVQFDVIPL</sequence>
<name>RL9_PICP2</name>
<keyword id="KW-1185">Reference proteome</keyword>
<keyword id="KW-0687">Ribonucleoprotein</keyword>
<keyword id="KW-0689">Ribosomal protein</keyword>
<keyword id="KW-0694">RNA-binding</keyword>
<keyword id="KW-0699">rRNA-binding</keyword>
<reference key="1">
    <citation type="submission" date="2008-02" db="EMBL/GenBank/DDBJ databases">
        <title>Complete sequence of Synechococcus sp. PCC 7002.</title>
        <authorList>
            <person name="Li T."/>
            <person name="Zhao J."/>
            <person name="Zhao C."/>
            <person name="Liu Z."/>
            <person name="Zhao F."/>
            <person name="Marquardt J."/>
            <person name="Nomura C.T."/>
            <person name="Persson S."/>
            <person name="Detter J.C."/>
            <person name="Richardson P.M."/>
            <person name="Lanz C."/>
            <person name="Schuster S.C."/>
            <person name="Wang J."/>
            <person name="Li S."/>
            <person name="Huang X."/>
            <person name="Cai T."/>
            <person name="Yu Z."/>
            <person name="Luo J."/>
            <person name="Zhao J."/>
            <person name="Bryant D.A."/>
        </authorList>
    </citation>
    <scope>NUCLEOTIDE SEQUENCE [LARGE SCALE GENOMIC DNA]</scope>
    <source>
        <strain>ATCC 27264 / PCC 7002 / PR-6</strain>
    </source>
</reference>
<gene>
    <name evidence="1" type="primary">rplI</name>
    <name evidence="1" type="synonym">rpl9</name>
    <name type="ordered locus">SYNPCC7002_A1498</name>
</gene>